<proteinExistence type="inferred from homology"/>
<gene>
    <name evidence="2" type="primary">eca</name>
    <name type="ORF">GM26230</name>
</gene>
<dbReference type="EMBL" id="CH480815">
    <property type="protein sequence ID" value="EDW42839.1"/>
    <property type="molecule type" value="Genomic_DNA"/>
</dbReference>
<dbReference type="SMR" id="B4HJV5"/>
<dbReference type="STRING" id="7238.B4HJV5"/>
<dbReference type="EnsemblMetazoa" id="FBtr0209215">
    <property type="protein sequence ID" value="FBpp0207707"/>
    <property type="gene ID" value="FBgn0181085"/>
</dbReference>
<dbReference type="EnsemblMetazoa" id="XM_002031817.2">
    <property type="protein sequence ID" value="XP_002031853.1"/>
    <property type="gene ID" value="LOC6607065"/>
</dbReference>
<dbReference type="GeneID" id="6607065"/>
<dbReference type="KEGG" id="dse:6607065"/>
<dbReference type="CTD" id="41177"/>
<dbReference type="HOGENOM" id="CLU_066963_2_2_1"/>
<dbReference type="OMA" id="GATCAWQ"/>
<dbReference type="OrthoDB" id="3515at7215"/>
<dbReference type="PhylomeDB" id="B4HJV5"/>
<dbReference type="Proteomes" id="UP000001292">
    <property type="component" value="Unassembled WGS sequence"/>
</dbReference>
<dbReference type="GO" id="GO:0005789">
    <property type="term" value="C:endoplasmic reticulum membrane"/>
    <property type="evidence" value="ECO:0007669"/>
    <property type="project" value="UniProtKB-SubCell"/>
</dbReference>
<dbReference type="GO" id="GO:0009953">
    <property type="term" value="P:dorsal/ventral pattern formation"/>
    <property type="evidence" value="ECO:0000250"/>
    <property type="project" value="UniProtKB"/>
</dbReference>
<dbReference type="InterPro" id="IPR015720">
    <property type="entry name" value="Emp24-like"/>
</dbReference>
<dbReference type="InterPro" id="IPR009038">
    <property type="entry name" value="GOLD_dom"/>
</dbReference>
<dbReference type="PANTHER" id="PTHR22811">
    <property type="entry name" value="TRANSMEMBRANE EMP24 DOMAIN-CONTAINING PROTEIN"/>
    <property type="match status" value="1"/>
</dbReference>
<dbReference type="Pfam" id="PF01105">
    <property type="entry name" value="EMP24_GP25L"/>
    <property type="match status" value="1"/>
</dbReference>
<dbReference type="SMART" id="SM01190">
    <property type="entry name" value="EMP24_GP25L"/>
    <property type="match status" value="1"/>
</dbReference>
<dbReference type="PROSITE" id="PS50866">
    <property type="entry name" value="GOLD"/>
    <property type="match status" value="1"/>
</dbReference>
<keyword id="KW-0175">Coiled coil</keyword>
<keyword id="KW-0217">Developmental protein</keyword>
<keyword id="KW-0256">Endoplasmic reticulum</keyword>
<keyword id="KW-0472">Membrane</keyword>
<keyword id="KW-1185">Reference proteome</keyword>
<keyword id="KW-0732">Signal</keyword>
<keyword id="KW-0812">Transmembrane</keyword>
<keyword id="KW-1133">Transmembrane helix</keyword>
<evidence type="ECO:0000250" key="1"/>
<evidence type="ECO:0000250" key="2">
    <source>
        <dbReference type="UniProtKB" id="Q8SXY6"/>
    </source>
</evidence>
<evidence type="ECO:0000255" key="3"/>
<evidence type="ECO:0000255" key="4">
    <source>
        <dbReference type="PROSITE-ProRule" id="PRU00096"/>
    </source>
</evidence>
<evidence type="ECO:0000312" key="5">
    <source>
        <dbReference type="EMBL" id="EDW42839.1"/>
    </source>
</evidence>
<reference evidence="5" key="1">
    <citation type="journal article" date="2007" name="Nature">
        <title>Evolution of genes and genomes on the Drosophila phylogeny.</title>
        <authorList>
            <consortium name="Drosophila 12 genomes consortium"/>
        </authorList>
    </citation>
    <scope>NUCLEOTIDE SEQUENCE [LARGE SCALE GENOMIC DNA]</scope>
    <source>
        <strain evidence="5">Rob3c / Tucson 14021-0248.25</strain>
    </source>
</reference>
<feature type="signal peptide" evidence="3">
    <location>
        <begin position="1"/>
        <end position="20"/>
    </location>
</feature>
<feature type="chain" id="PRO_0000393931" description="Transmembrane emp24 domain-containing protein eca" evidence="3">
    <location>
        <begin position="21"/>
        <end position="216"/>
    </location>
</feature>
<feature type="topological domain" description="Lumenal" evidence="3">
    <location>
        <begin position="21"/>
        <end position="182"/>
    </location>
</feature>
<feature type="transmembrane region" description="Helical" evidence="3">
    <location>
        <begin position="183"/>
        <end position="203"/>
    </location>
</feature>
<feature type="topological domain" description="Cytoplasmic" evidence="3">
    <location>
        <begin position="204"/>
        <end position="216"/>
    </location>
</feature>
<feature type="domain" description="GOLD" evidence="4">
    <location>
        <begin position="30"/>
        <end position="126"/>
    </location>
</feature>
<feature type="coiled-coil region" evidence="3">
    <location>
        <begin position="134"/>
        <end position="164"/>
    </location>
</feature>
<feature type="short sequence motif" description="Prevents secretion from ER" evidence="3">
    <location>
        <begin position="213"/>
        <end position="216"/>
    </location>
</feature>
<comment type="function">
    <text evidence="1">Eca and bai are essential, though not redundant, for dorsoventral patterning of the embryo. Specifically required during early embryogenesis for the activity of maternal tkv, while the zygotic tkv is not affected. Involved in Golgi organization (By similarity).</text>
</comment>
<comment type="subcellular location">
    <subcellularLocation>
        <location evidence="3">Endoplasmic reticulum membrane</location>
        <topology evidence="3">Single-pass type I membrane protein</topology>
    </subcellularLocation>
</comment>
<comment type="similarity">
    <text evidence="3">Belongs to the EMP24/GP25L family.</text>
</comment>
<organism>
    <name type="scientific">Drosophila sechellia</name>
    <name type="common">Fruit fly</name>
    <dbReference type="NCBI Taxonomy" id="7238"/>
    <lineage>
        <taxon>Eukaryota</taxon>
        <taxon>Metazoa</taxon>
        <taxon>Ecdysozoa</taxon>
        <taxon>Arthropoda</taxon>
        <taxon>Hexapoda</taxon>
        <taxon>Insecta</taxon>
        <taxon>Pterygota</taxon>
        <taxon>Neoptera</taxon>
        <taxon>Endopterygota</taxon>
        <taxon>Diptera</taxon>
        <taxon>Brachycera</taxon>
        <taxon>Muscomorpha</taxon>
        <taxon>Ephydroidea</taxon>
        <taxon>Drosophilidae</taxon>
        <taxon>Drosophila</taxon>
        <taxon>Sophophora</taxon>
    </lineage>
</organism>
<name>TMEDE_DROSE</name>
<accession>B4HJV5</accession>
<protein>
    <recommendedName>
        <fullName evidence="2">Transmembrane emp24 domain-containing protein eca</fullName>
    </recommendedName>
</protein>
<sequence>MRDQFISLALILCVLHSACGLYFHISETERKCFIEEVPDETTVIVNYKVELYDPRSNGFMPSSPGIGMHVEVRDSDDKIVLSRVYSSQGRISFTSHTPGEHVICMFSNSTAWFSGAQLRVHLDIQVGEHAIDYANVAQKEKLTELQLRIRQLLDQVEQITKEQNYQRYREERFRHTSESTNSRVLWWSLAQTIVLVCMGFWQMRHLKSFFEAKKLV</sequence>